<protein>
    <recommendedName>
        <fullName>RIIa domain-containing protein 1</fullName>
    </recommendedName>
</protein>
<organism>
    <name type="scientific">Homo sapiens</name>
    <name type="common">Human</name>
    <dbReference type="NCBI Taxonomy" id="9606"/>
    <lineage>
        <taxon>Eukaryota</taxon>
        <taxon>Metazoa</taxon>
        <taxon>Chordata</taxon>
        <taxon>Craniata</taxon>
        <taxon>Vertebrata</taxon>
        <taxon>Euteleostomi</taxon>
        <taxon>Mammalia</taxon>
        <taxon>Eutheria</taxon>
        <taxon>Euarchontoglires</taxon>
        <taxon>Primates</taxon>
        <taxon>Haplorrhini</taxon>
        <taxon>Catarrhini</taxon>
        <taxon>Hominidae</taxon>
        <taxon>Homo</taxon>
    </lineage>
</organism>
<proteinExistence type="evidence at protein level"/>
<sequence>METLPGLLQRPDPGALSAAQLEQLRKFKIQTRIANEKYLRTHKEVEWLISGFFREIFLKRPDNILEFAADYFTDPRLPNKIHMQLIKDKKAA</sequence>
<accession>A6NNX1</accession>
<dbReference type="EMBL" id="AL589765">
    <property type="status" value="NOT_ANNOTATED_CDS"/>
    <property type="molecule type" value="Genomic_DNA"/>
</dbReference>
<dbReference type="EMBL" id="CH471121">
    <property type="protein sequence ID" value="EAW53418.1"/>
    <property type="molecule type" value="Genomic_DNA"/>
</dbReference>
<dbReference type="CCDS" id="CCDS53368.1"/>
<dbReference type="RefSeq" id="NP_001138428.1">
    <property type="nucleotide sequence ID" value="NM_001144956.3"/>
</dbReference>
<dbReference type="SMR" id="A6NNX1"/>
<dbReference type="BioGRID" id="129887">
    <property type="interactions" value="5"/>
</dbReference>
<dbReference type="FunCoup" id="A6NNX1">
    <property type="interactions" value="13"/>
</dbReference>
<dbReference type="STRING" id="9606.ENSP00000419249"/>
<dbReference type="PhosphoSitePlus" id="A6NNX1"/>
<dbReference type="BioMuta" id="RIIAD1"/>
<dbReference type="MassIVE" id="A6NNX1"/>
<dbReference type="PaxDb" id="9606-ENSP00000419249"/>
<dbReference type="PeptideAtlas" id="A6NNX1"/>
<dbReference type="ProteomicsDB" id="1645"/>
<dbReference type="Antibodypedia" id="50162">
    <property type="antibodies" value="16 antibodies from 8 providers"/>
</dbReference>
<dbReference type="DNASU" id="284485"/>
<dbReference type="Ensembl" id="ENST00000479191.2">
    <property type="protein sequence ID" value="ENSP00000419249.1"/>
    <property type="gene ID" value="ENSG00000178796.13"/>
</dbReference>
<dbReference type="GeneID" id="284485"/>
<dbReference type="KEGG" id="hsa:284485"/>
<dbReference type="MANE-Select" id="ENST00000479191.2">
    <property type="protein sequence ID" value="ENSP00000419249.1"/>
    <property type="RefSeq nucleotide sequence ID" value="NM_001144956.3"/>
    <property type="RefSeq protein sequence ID" value="NP_001138428.1"/>
</dbReference>
<dbReference type="UCSC" id="uc010pdj.2">
    <property type="organism name" value="human"/>
</dbReference>
<dbReference type="AGR" id="HGNC:26686"/>
<dbReference type="CTD" id="284485"/>
<dbReference type="DisGeNET" id="284485"/>
<dbReference type="GeneCards" id="RIIAD1"/>
<dbReference type="HGNC" id="HGNC:26686">
    <property type="gene designation" value="RIIAD1"/>
</dbReference>
<dbReference type="HPA" id="ENSG00000178796">
    <property type="expression patterns" value="Group enriched (brain, fallopian tube, pituitary gland, testis)"/>
</dbReference>
<dbReference type="neXtProt" id="NX_A6NNX1"/>
<dbReference type="OpenTargets" id="ENSG00000178796"/>
<dbReference type="PharmGKB" id="PA165750490"/>
<dbReference type="VEuPathDB" id="HostDB:ENSG00000178796"/>
<dbReference type="eggNOG" id="ENOG502S8ZF">
    <property type="taxonomic scope" value="Eukaryota"/>
</dbReference>
<dbReference type="GeneTree" id="ENSGT00390000003062"/>
<dbReference type="HOGENOM" id="CLU_144881_1_1_1"/>
<dbReference type="InParanoid" id="A6NNX1"/>
<dbReference type="OMA" id="AADHFTN"/>
<dbReference type="OrthoDB" id="10249338at2759"/>
<dbReference type="PAN-GO" id="A6NNX1">
    <property type="GO annotations" value="0 GO annotations based on evolutionary models"/>
</dbReference>
<dbReference type="PhylomeDB" id="A6NNX1"/>
<dbReference type="TreeFam" id="TF328360"/>
<dbReference type="PathwayCommons" id="A6NNX1"/>
<dbReference type="SignaLink" id="A6NNX1"/>
<dbReference type="BioGRID-ORCS" id="284485">
    <property type="hits" value="12 hits in 1136 CRISPR screens"/>
</dbReference>
<dbReference type="GenomeRNAi" id="284485"/>
<dbReference type="Pharos" id="A6NNX1">
    <property type="development level" value="Tdark"/>
</dbReference>
<dbReference type="PRO" id="PR:A6NNX1"/>
<dbReference type="Proteomes" id="UP000005640">
    <property type="component" value="Chromosome 1"/>
</dbReference>
<dbReference type="RNAct" id="A6NNX1">
    <property type="molecule type" value="protein"/>
</dbReference>
<dbReference type="Bgee" id="ENSG00000178796">
    <property type="expression patterns" value="Expressed in oocyte and 130 other cell types or tissues"/>
</dbReference>
<dbReference type="ExpressionAtlas" id="A6NNX1">
    <property type="expression patterns" value="baseline and differential"/>
</dbReference>
<dbReference type="CDD" id="cd22971">
    <property type="entry name" value="DD_RIIAD1"/>
    <property type="match status" value="1"/>
</dbReference>
<dbReference type="Gene3D" id="1.20.890.10">
    <property type="entry name" value="cAMP-dependent protein kinase regulatory subunit, dimerization-anchoring domain"/>
    <property type="match status" value="1"/>
</dbReference>
<dbReference type="InterPro" id="IPR003117">
    <property type="entry name" value="cAMP_dep_PK_reg_su_I/II_a/b"/>
</dbReference>
<dbReference type="PANTHER" id="PTHR15505">
    <property type="entry name" value="RIIA DOMAIN-CONTAINING PROTEIN 1"/>
    <property type="match status" value="1"/>
</dbReference>
<dbReference type="PANTHER" id="PTHR15505:SF4">
    <property type="entry name" value="RIIA DOMAIN-CONTAINING PROTEIN 1"/>
    <property type="match status" value="1"/>
</dbReference>
<dbReference type="Pfam" id="PF02197">
    <property type="entry name" value="RIIa"/>
    <property type="match status" value="1"/>
</dbReference>
<dbReference type="SUPFAM" id="SSF47391">
    <property type="entry name" value="Dimerization-anchoring domain of cAMP-dependent PK regulatory subunit"/>
    <property type="match status" value="1"/>
</dbReference>
<name>RIAD1_HUMAN</name>
<feature type="chain" id="PRO_0000342467" description="RIIa domain-containing protein 1">
    <location>
        <begin position="1"/>
        <end position="92"/>
    </location>
</feature>
<feature type="domain" description="RIIa">
    <location>
        <begin position="43"/>
        <end position="77"/>
    </location>
</feature>
<keyword id="KW-1267">Proteomics identification</keyword>
<keyword id="KW-1185">Reference proteome</keyword>
<reference key="1">
    <citation type="journal article" date="2006" name="Nature">
        <title>The DNA sequence and biological annotation of human chromosome 1.</title>
        <authorList>
            <person name="Gregory S.G."/>
            <person name="Barlow K.F."/>
            <person name="McLay K.E."/>
            <person name="Kaul R."/>
            <person name="Swarbreck D."/>
            <person name="Dunham A."/>
            <person name="Scott C.E."/>
            <person name="Howe K.L."/>
            <person name="Woodfine K."/>
            <person name="Spencer C.C.A."/>
            <person name="Jones M.C."/>
            <person name="Gillson C."/>
            <person name="Searle S."/>
            <person name="Zhou Y."/>
            <person name="Kokocinski F."/>
            <person name="McDonald L."/>
            <person name="Evans R."/>
            <person name="Phillips K."/>
            <person name="Atkinson A."/>
            <person name="Cooper R."/>
            <person name="Jones C."/>
            <person name="Hall R.E."/>
            <person name="Andrews T.D."/>
            <person name="Lloyd C."/>
            <person name="Ainscough R."/>
            <person name="Almeida J.P."/>
            <person name="Ambrose K.D."/>
            <person name="Anderson F."/>
            <person name="Andrew R.W."/>
            <person name="Ashwell R.I.S."/>
            <person name="Aubin K."/>
            <person name="Babbage A.K."/>
            <person name="Bagguley C.L."/>
            <person name="Bailey J."/>
            <person name="Beasley H."/>
            <person name="Bethel G."/>
            <person name="Bird C.P."/>
            <person name="Bray-Allen S."/>
            <person name="Brown J.Y."/>
            <person name="Brown A.J."/>
            <person name="Buckley D."/>
            <person name="Burton J."/>
            <person name="Bye J."/>
            <person name="Carder C."/>
            <person name="Chapman J.C."/>
            <person name="Clark S.Y."/>
            <person name="Clarke G."/>
            <person name="Clee C."/>
            <person name="Cobley V."/>
            <person name="Collier R.E."/>
            <person name="Corby N."/>
            <person name="Coville G.J."/>
            <person name="Davies J."/>
            <person name="Deadman R."/>
            <person name="Dunn M."/>
            <person name="Earthrowl M."/>
            <person name="Ellington A.G."/>
            <person name="Errington H."/>
            <person name="Frankish A."/>
            <person name="Frankland J."/>
            <person name="French L."/>
            <person name="Garner P."/>
            <person name="Garnett J."/>
            <person name="Gay L."/>
            <person name="Ghori M.R.J."/>
            <person name="Gibson R."/>
            <person name="Gilby L.M."/>
            <person name="Gillett W."/>
            <person name="Glithero R.J."/>
            <person name="Grafham D.V."/>
            <person name="Griffiths C."/>
            <person name="Griffiths-Jones S."/>
            <person name="Grocock R."/>
            <person name="Hammond S."/>
            <person name="Harrison E.S.I."/>
            <person name="Hart E."/>
            <person name="Haugen E."/>
            <person name="Heath P.D."/>
            <person name="Holmes S."/>
            <person name="Holt K."/>
            <person name="Howden P.J."/>
            <person name="Hunt A.R."/>
            <person name="Hunt S.E."/>
            <person name="Hunter G."/>
            <person name="Isherwood J."/>
            <person name="James R."/>
            <person name="Johnson C."/>
            <person name="Johnson D."/>
            <person name="Joy A."/>
            <person name="Kay M."/>
            <person name="Kershaw J.K."/>
            <person name="Kibukawa M."/>
            <person name="Kimberley A.M."/>
            <person name="King A."/>
            <person name="Knights A.J."/>
            <person name="Lad H."/>
            <person name="Laird G."/>
            <person name="Lawlor S."/>
            <person name="Leongamornlert D.A."/>
            <person name="Lloyd D.M."/>
            <person name="Loveland J."/>
            <person name="Lovell J."/>
            <person name="Lush M.J."/>
            <person name="Lyne R."/>
            <person name="Martin S."/>
            <person name="Mashreghi-Mohammadi M."/>
            <person name="Matthews L."/>
            <person name="Matthews N.S.W."/>
            <person name="McLaren S."/>
            <person name="Milne S."/>
            <person name="Mistry S."/>
            <person name="Moore M.J.F."/>
            <person name="Nickerson T."/>
            <person name="O'Dell C.N."/>
            <person name="Oliver K."/>
            <person name="Palmeiri A."/>
            <person name="Palmer S.A."/>
            <person name="Parker A."/>
            <person name="Patel D."/>
            <person name="Pearce A.V."/>
            <person name="Peck A.I."/>
            <person name="Pelan S."/>
            <person name="Phelps K."/>
            <person name="Phillimore B.J."/>
            <person name="Plumb R."/>
            <person name="Rajan J."/>
            <person name="Raymond C."/>
            <person name="Rouse G."/>
            <person name="Saenphimmachak C."/>
            <person name="Sehra H.K."/>
            <person name="Sheridan E."/>
            <person name="Shownkeen R."/>
            <person name="Sims S."/>
            <person name="Skuce C.D."/>
            <person name="Smith M."/>
            <person name="Steward C."/>
            <person name="Subramanian S."/>
            <person name="Sycamore N."/>
            <person name="Tracey A."/>
            <person name="Tromans A."/>
            <person name="Van Helmond Z."/>
            <person name="Wall M."/>
            <person name="Wallis J.M."/>
            <person name="White S."/>
            <person name="Whitehead S.L."/>
            <person name="Wilkinson J.E."/>
            <person name="Willey D.L."/>
            <person name="Williams H."/>
            <person name="Wilming L."/>
            <person name="Wray P.W."/>
            <person name="Wu Z."/>
            <person name="Coulson A."/>
            <person name="Vaudin M."/>
            <person name="Sulston J.E."/>
            <person name="Durbin R.M."/>
            <person name="Hubbard T."/>
            <person name="Wooster R."/>
            <person name="Dunham I."/>
            <person name="Carter N.P."/>
            <person name="McVean G."/>
            <person name="Ross M.T."/>
            <person name="Harrow J."/>
            <person name="Olson M.V."/>
            <person name="Beck S."/>
            <person name="Rogers J."/>
            <person name="Bentley D.R."/>
        </authorList>
    </citation>
    <scope>NUCLEOTIDE SEQUENCE [LARGE SCALE GENOMIC DNA]</scope>
</reference>
<reference key="2">
    <citation type="submission" date="2005-09" db="EMBL/GenBank/DDBJ databases">
        <authorList>
            <person name="Mural R.J."/>
            <person name="Istrail S."/>
            <person name="Sutton G.G."/>
            <person name="Florea L."/>
            <person name="Halpern A.L."/>
            <person name="Mobarry C.M."/>
            <person name="Lippert R."/>
            <person name="Walenz B."/>
            <person name="Shatkay H."/>
            <person name="Dew I."/>
            <person name="Miller J.R."/>
            <person name="Flanigan M.J."/>
            <person name="Edwards N.J."/>
            <person name="Bolanos R."/>
            <person name="Fasulo D."/>
            <person name="Halldorsson B.V."/>
            <person name="Hannenhalli S."/>
            <person name="Turner R."/>
            <person name="Yooseph S."/>
            <person name="Lu F."/>
            <person name="Nusskern D.R."/>
            <person name="Shue B.C."/>
            <person name="Zheng X.H."/>
            <person name="Zhong F."/>
            <person name="Delcher A.L."/>
            <person name="Huson D.H."/>
            <person name="Kravitz S.A."/>
            <person name="Mouchard L."/>
            <person name="Reinert K."/>
            <person name="Remington K.A."/>
            <person name="Clark A.G."/>
            <person name="Waterman M.S."/>
            <person name="Eichler E.E."/>
            <person name="Adams M.D."/>
            <person name="Hunkapiller M.W."/>
            <person name="Myers E.W."/>
            <person name="Venter J.C."/>
        </authorList>
    </citation>
    <scope>NUCLEOTIDE SEQUENCE [LARGE SCALE GENOMIC DNA]</scope>
</reference>
<gene>
    <name type="primary">RIIAD1</name>
    <name type="synonym">C1orf230</name>
</gene>